<organism>
    <name type="scientific">Pongo abelii</name>
    <name type="common">Sumatran orangutan</name>
    <name type="synonym">Pongo pygmaeus abelii</name>
    <dbReference type="NCBI Taxonomy" id="9601"/>
    <lineage>
        <taxon>Eukaryota</taxon>
        <taxon>Metazoa</taxon>
        <taxon>Chordata</taxon>
        <taxon>Craniata</taxon>
        <taxon>Vertebrata</taxon>
        <taxon>Euteleostomi</taxon>
        <taxon>Mammalia</taxon>
        <taxon>Eutheria</taxon>
        <taxon>Euarchontoglires</taxon>
        <taxon>Primates</taxon>
        <taxon>Haplorrhini</taxon>
        <taxon>Catarrhini</taxon>
        <taxon>Hominidae</taxon>
        <taxon>Pongo</taxon>
    </lineage>
</organism>
<feature type="chain" id="PRO_0000220698" description="Polyunsaturated fatty acid lipoxygenase ALOX15">
    <location>
        <begin position="1"/>
        <end position="662"/>
    </location>
</feature>
<feature type="domain" description="PLAT" evidence="7">
    <location>
        <begin position="2"/>
        <end position="114"/>
    </location>
</feature>
<feature type="domain" description="Lipoxygenase" evidence="8">
    <location>
        <begin position="115"/>
        <end position="662"/>
    </location>
</feature>
<feature type="binding site" evidence="8">
    <location>
        <position position="360"/>
    </location>
    <ligand>
        <name>Fe cation</name>
        <dbReference type="ChEBI" id="CHEBI:24875"/>
        <note>catalytic</note>
    </ligand>
</feature>
<feature type="binding site" evidence="8">
    <location>
        <position position="365"/>
    </location>
    <ligand>
        <name>Fe cation</name>
        <dbReference type="ChEBI" id="CHEBI:24875"/>
        <note>catalytic</note>
    </ligand>
</feature>
<feature type="binding site" evidence="8">
    <location>
        <position position="540"/>
    </location>
    <ligand>
        <name>Fe cation</name>
        <dbReference type="ChEBI" id="CHEBI:24875"/>
        <note>catalytic</note>
    </ligand>
</feature>
<feature type="binding site" evidence="8">
    <location>
        <position position="544"/>
    </location>
    <ligand>
        <name>Fe cation</name>
        <dbReference type="ChEBI" id="CHEBI:24875"/>
        <note>catalytic</note>
    </ligand>
</feature>
<feature type="binding site" evidence="8">
    <location>
        <position position="662"/>
    </location>
    <ligand>
        <name>Fe cation</name>
        <dbReference type="ChEBI" id="CHEBI:24875"/>
        <note>catalytic</note>
    </ligand>
</feature>
<name>LOX15_PONAB</name>
<reference key="1">
    <citation type="submission" date="2004-11" db="EMBL/GenBank/DDBJ databases">
        <authorList>
            <consortium name="The German cDNA consortium"/>
        </authorList>
    </citation>
    <scope>NUCLEOTIDE SEQUENCE [LARGE SCALE MRNA]</scope>
    <source>
        <tissue>Heart</tissue>
    </source>
</reference>
<comment type="function">
    <text evidence="3 5 6">Non-heme iron-containing dioxygenase that catalyzes the stereo-specific peroxidation of free and esterified polyunsaturated fatty acids generating a spectrum of bioactive lipid mediators. It inserts peroxyl groups at C12 or C15 of arachidonate ((5Z,8Z,11Z,14Z)-eicosatetraenoate) producing both 12-hydroperoxyeicosatetraenoate/12-HPETE and 15-hydroperoxyeicosatetraenoate/15-HPETE (By similarity). It may then act on 12-HPETE to produce hepoxilins, which may show pro-inflammatory properties (By similarity). Can also peroxidize linoleate ((9Z,12Z)-octadecadienoate) to 13-hydroperoxyoctadecadienoate. May participate in the sequential oxidations of DHA ((4Z,7Z,10Z,13Z,16Z,19Z)-docosahexaenoate) to generate specialized pro-resolving mediators (SPMs)like resolvin D5 ((7S,17S)-diHPDHA) and (7S,14S)-diHPDHA, that actively down-regulate the immune response and have anti-aggregation properties with platelets. Can convert epoxy fatty acids to hydroperoxy-epoxides derivatives followed by an intramolecular nucleophilic substitution leading to the formation of monocyclic endoperoxides (By similarity). Plays an important role during the maintenance of self-tolerance by peroxidizing membrane-bound phosphatidylethanolamine which can then signal the sorting process for clearance of apoptotic cells during inflammation and prevent an autoimmune response. In addition to its role in the immune and inflammatory responses, this enzyme may play a role in epithelial wound healing in the cornea through production of lipoxin A4 (LXA(4)) and docosahexaenoic acid-derived neuroprotectin D1 (NPD1; 10R,17S-HDHA), both lipid autacoids exhibit anti-inflammatory and neuroprotective properties. Furthermore, it may regulate actin polymerization which is crucial for several biological processes such as the phagocytosis of apoptotic cells. It is also implicated in the generation of endogenous ligands for peroxisome proliferator activated receptor (PPAR-gamma), hence modulating macrophage development and function. It may also exert a negative effect on skeletal development by regulating bone mass through this pathway. As well as participates in ER stress and downstream inflammation in adipocytes, pancreatic islets, and liver (By similarity). Finally, it is also involved in the cellular response to IL13/interleukin-13 (By similarity).</text>
</comment>
<comment type="catalytic activity">
    <reaction evidence="3">
        <text>(5Z,8Z,11Z,14Z)-eicosatetraenoate + O2 = (12S)-hydroperoxy-(5Z,8Z,10E,14Z)-eicosatetraenoate</text>
        <dbReference type="Rhea" id="RHEA:10428"/>
        <dbReference type="ChEBI" id="CHEBI:15379"/>
        <dbReference type="ChEBI" id="CHEBI:32395"/>
        <dbReference type="ChEBI" id="CHEBI:57444"/>
        <dbReference type="EC" id="1.13.11.31"/>
    </reaction>
    <physiologicalReaction direction="left-to-right" evidence="3">
        <dbReference type="Rhea" id="RHEA:10429"/>
    </physiologicalReaction>
</comment>
<comment type="catalytic activity">
    <reaction evidence="3">
        <text>(9Z,12Z)-octadecadienoate + O2 = (13S)-hydroperoxy-(9Z,11E)-octadecadienoate</text>
        <dbReference type="Rhea" id="RHEA:22780"/>
        <dbReference type="ChEBI" id="CHEBI:15379"/>
        <dbReference type="ChEBI" id="CHEBI:30245"/>
        <dbReference type="ChEBI" id="CHEBI:57466"/>
        <dbReference type="EC" id="1.13.11.12"/>
    </reaction>
    <physiologicalReaction direction="left-to-right" evidence="3">
        <dbReference type="Rhea" id="RHEA:22781"/>
    </physiologicalReaction>
</comment>
<comment type="catalytic activity">
    <reaction evidence="3">
        <text>(5Z,8Z,11Z,14Z)-eicosatetraenoate + O2 = (15S)-hydroperoxy-(5Z,8Z,11Z,13E)-eicosatetraenoate</text>
        <dbReference type="Rhea" id="RHEA:16869"/>
        <dbReference type="ChEBI" id="CHEBI:15379"/>
        <dbReference type="ChEBI" id="CHEBI:32395"/>
        <dbReference type="ChEBI" id="CHEBI:57446"/>
        <dbReference type="EC" id="1.13.11.33"/>
    </reaction>
    <physiologicalReaction direction="left-to-right" evidence="3">
        <dbReference type="Rhea" id="RHEA:16870"/>
    </physiologicalReaction>
</comment>
<comment type="catalytic activity">
    <reaction evidence="3">
        <text>(5Z,8Z,11Z,14Z)-eicosatetraenoate + 2 O2 = (14R,15S)-dihydroperoxy-(5Z,8Z,10E,12E)-eicosatetraenoate</text>
        <dbReference type="Rhea" id="RHEA:50928"/>
        <dbReference type="ChEBI" id="CHEBI:15379"/>
        <dbReference type="ChEBI" id="CHEBI:32395"/>
        <dbReference type="ChEBI" id="CHEBI:133900"/>
    </reaction>
    <physiologicalReaction direction="left-to-right" evidence="3">
        <dbReference type="Rhea" id="RHEA:50929"/>
    </physiologicalReaction>
</comment>
<comment type="catalytic activity">
    <reaction evidence="3">
        <text>(5Z,8Z,11Z,14Z)-eicosatetraenoate + 2 O2 = (8S,15S)-dihydroperoxy-(5Z,9E,11Z,13E)-eicosatetraenoate</text>
        <dbReference type="Rhea" id="RHEA:50924"/>
        <dbReference type="ChEBI" id="CHEBI:15379"/>
        <dbReference type="ChEBI" id="CHEBI:32395"/>
        <dbReference type="ChEBI" id="CHEBI:133899"/>
    </reaction>
    <physiologicalReaction direction="left-to-right" evidence="3">
        <dbReference type="Rhea" id="RHEA:50925"/>
    </physiologicalReaction>
</comment>
<comment type="catalytic activity">
    <reaction evidence="3">
        <text>(14S,15R)-epoxy-(5Z,8Z,11Z)-eicosatrienoate + O2 = (8S)-hydroperoxy-(14S,15R)-epoxy-(5Z,9E,11Z)-eicosatrienoate</text>
        <dbReference type="Rhea" id="RHEA:50288"/>
        <dbReference type="ChEBI" id="CHEBI:15379"/>
        <dbReference type="ChEBI" id="CHEBI:131964"/>
        <dbReference type="ChEBI" id="CHEBI:132068"/>
    </reaction>
    <physiologicalReaction direction="left-to-right" evidence="3">
        <dbReference type="Rhea" id="RHEA:50289"/>
    </physiologicalReaction>
</comment>
<comment type="catalytic activity">
    <reaction evidence="3">
        <text>(14S,15R)-epoxy-(5Z,8Z,11Z)-eicosatrienoate + O2 = (12S)-hydroperoxy-(14S,15R)-epoxy-(5Z,8Z,10E)-eicosatrienoate</text>
        <dbReference type="Rhea" id="RHEA:50284"/>
        <dbReference type="ChEBI" id="CHEBI:15379"/>
        <dbReference type="ChEBI" id="CHEBI:131964"/>
        <dbReference type="ChEBI" id="CHEBI:132065"/>
    </reaction>
    <physiologicalReaction direction="left-to-right" evidence="3">
        <dbReference type="Rhea" id="RHEA:50285"/>
    </physiologicalReaction>
</comment>
<comment type="catalytic activity">
    <reaction evidence="3">
        <text>(14R,15S)-epoxy-(5Z,8Z,11Z)-eicosatrienoate + O2 = (5S)-hydroperoxy-(14R,15S)-epoxy-(6E,8Z,11Z)-eicosatrienoate</text>
        <dbReference type="Rhea" id="RHEA:50280"/>
        <dbReference type="ChEBI" id="CHEBI:15379"/>
        <dbReference type="ChEBI" id="CHEBI:131965"/>
        <dbReference type="ChEBI" id="CHEBI:132067"/>
    </reaction>
    <physiologicalReaction direction="left-to-right" evidence="3">
        <dbReference type="Rhea" id="RHEA:50281"/>
    </physiologicalReaction>
</comment>
<comment type="catalytic activity">
    <reaction evidence="3">
        <text>(14R,15S)-epoxy-(5Z,8Z,11Z)-eicosatrienoate + O2 = (12S)-hydroperoxy-(14R,15S)-epoxy-(5Z,8Z,10E)-eicosatrienoate</text>
        <dbReference type="Rhea" id="RHEA:50276"/>
        <dbReference type="ChEBI" id="CHEBI:15379"/>
        <dbReference type="ChEBI" id="CHEBI:131965"/>
        <dbReference type="ChEBI" id="CHEBI:132063"/>
    </reaction>
    <physiologicalReaction direction="left-to-right" evidence="3">
        <dbReference type="Rhea" id="RHEA:50277"/>
    </physiologicalReaction>
</comment>
<comment type="catalytic activity">
    <reaction evidence="3">
        <text>(15R)-hydroperoxy-(5Z,8Z,11Z,13E)-eicosatetraenoate = 15-oxo-(5Z,8Z,11Z,13E)-eicosatetraenoate + H2O</text>
        <dbReference type="Rhea" id="RHEA:50152"/>
        <dbReference type="ChEBI" id="CHEBI:15377"/>
        <dbReference type="ChEBI" id="CHEBI:57410"/>
        <dbReference type="ChEBI" id="CHEBI:82626"/>
    </reaction>
    <physiologicalReaction direction="left-to-right" evidence="3">
        <dbReference type="Rhea" id="RHEA:50153"/>
    </physiologicalReaction>
</comment>
<comment type="catalytic activity">
    <reaction evidence="3">
        <text>(15S)-hydroperoxy-(5Z,8Z,11Z,13E)-eicosatetraenoate = (14S,15S)-epoxy-(5Z,8Z,10E,12E)-eicosatetraenoate + H2O</text>
        <dbReference type="Rhea" id="RHEA:50140"/>
        <dbReference type="ChEBI" id="CHEBI:15377"/>
        <dbReference type="ChEBI" id="CHEBI:57446"/>
        <dbReference type="ChEBI" id="CHEBI:132070"/>
    </reaction>
    <physiologicalReaction direction="left-to-right" evidence="3">
        <dbReference type="Rhea" id="RHEA:50141"/>
    </physiologicalReaction>
</comment>
<comment type="catalytic activity">
    <reaction evidence="6">
        <text>(12S)-hydroperoxy-(5Z,8Z,10E,14Z)-eicosatetraenoate = (8S)-hydroxy-(11S,12S)-epoxy-(5Z,9E,14Z)-eicosatrienoate</text>
        <dbReference type="Rhea" id="RHEA:50216"/>
        <dbReference type="ChEBI" id="CHEBI:57444"/>
        <dbReference type="ChEBI" id="CHEBI:132129"/>
    </reaction>
    <physiologicalReaction direction="left-to-right" evidence="6">
        <dbReference type="Rhea" id="RHEA:50217"/>
    </physiologicalReaction>
</comment>
<comment type="catalytic activity">
    <reaction evidence="4">
        <text>(4Z,7Z,10Z,13Z,16Z)-docosapentaenoate + O2 = 14-hydroperoxy-(4Z,7Z,10Z,12E,16Z)-docosapentaenoate</text>
        <dbReference type="Rhea" id="RHEA:50824"/>
        <dbReference type="ChEBI" id="CHEBI:15379"/>
        <dbReference type="ChEBI" id="CHEBI:77226"/>
        <dbReference type="ChEBI" id="CHEBI:133799"/>
    </reaction>
    <physiologicalReaction direction="left-to-right" evidence="4">
        <dbReference type="Rhea" id="RHEA:50825"/>
    </physiologicalReaction>
</comment>
<comment type="catalytic activity">
    <reaction evidence="4">
        <text>(7Z,10Z,13Z,16Z,19Z)-docosapentaenoate + O2 = 14-hydroperoxy-(7Z,10Z,12E,16Z,19Z)-docosapentaenoate</text>
        <dbReference type="Rhea" id="RHEA:50836"/>
        <dbReference type="ChEBI" id="CHEBI:15379"/>
        <dbReference type="ChEBI" id="CHEBI:77224"/>
        <dbReference type="ChEBI" id="CHEBI:133798"/>
    </reaction>
    <physiologicalReaction direction="left-to-right" evidence="4">
        <dbReference type="Rhea" id="RHEA:50837"/>
    </physiologicalReaction>
</comment>
<comment type="catalytic activity">
    <reaction evidence="3">
        <text>(4Z,7Z,10Z,13Z,16Z,19Z)-docosahexaenoate + O2 = (14S)-hydroperoxy-(4Z,7Z,10Z,12E,16Z,19Z)-docosahexaenoate</text>
        <dbReference type="Rhea" id="RHEA:41332"/>
        <dbReference type="ChEBI" id="CHEBI:15379"/>
        <dbReference type="ChEBI" id="CHEBI:77016"/>
        <dbReference type="ChEBI" id="CHEBI:78048"/>
    </reaction>
    <physiologicalReaction direction="left-to-right" evidence="3">
        <dbReference type="Rhea" id="RHEA:41333"/>
    </physiologicalReaction>
</comment>
<comment type="catalytic activity">
    <reaction evidence="3">
        <text>(4Z,7Z,10Z,13Z,16Z,19Z)-docosahexaenoate + O2 = (17S)-hydroperoxy-(4Z,7Z,10Z,13Z,15E,19Z)-docosahexaenoate</text>
        <dbReference type="Rhea" id="RHEA:50840"/>
        <dbReference type="ChEBI" id="CHEBI:15379"/>
        <dbReference type="ChEBI" id="CHEBI:77016"/>
        <dbReference type="ChEBI" id="CHEBI:133795"/>
    </reaction>
    <physiologicalReaction direction="left-to-right" evidence="3">
        <dbReference type="Rhea" id="RHEA:50841"/>
    </physiologicalReaction>
</comment>
<comment type="catalytic activity">
    <reaction evidence="3">
        <text>(7S)-hydroperoxy-(4Z,8E,10Z,13Z,16Z,19Z)-docosahexaenoate + O2 = (7S,14S)-dihydroperoxy-(4Z,8E,10Z,12E,16Z,19Z)-docosahexaenoate</text>
        <dbReference type="Rhea" id="RHEA:64724"/>
        <dbReference type="ChEBI" id="CHEBI:15379"/>
        <dbReference type="ChEBI" id="CHEBI:156049"/>
        <dbReference type="ChEBI" id="CHEBI:156082"/>
    </reaction>
    <physiologicalReaction direction="left-to-right" evidence="3">
        <dbReference type="Rhea" id="RHEA:64725"/>
    </physiologicalReaction>
</comment>
<comment type="catalytic activity">
    <reaction evidence="3">
        <text>(7S)-hydroperoxy-(4Z,8E,10Z,13Z,16Z,19Z)-docosahexaenoate + O2 = (7S,17S)-dihydroperoxy-(4Z,8E,10Z,13Z,15E,19Z)-docosahexaenoate</text>
        <dbReference type="Rhea" id="RHEA:64728"/>
        <dbReference type="ChEBI" id="CHEBI:15379"/>
        <dbReference type="ChEBI" id="CHEBI:140349"/>
        <dbReference type="ChEBI" id="CHEBI:156049"/>
    </reaction>
    <physiologicalReaction direction="left-to-right" evidence="3">
        <dbReference type="Rhea" id="RHEA:64729"/>
    </physiologicalReaction>
</comment>
<comment type="catalytic activity">
    <reaction evidence="3">
        <text>(4Z,7Z,10Z,13Z,16Z,19Z)-docosahexaenoate + O2 = (11S)-hydroperoxy-(4Z,7Z,9E,13Z,16Z,19Z)-docosahexaenoate</text>
        <dbReference type="Rhea" id="RHEA:64732"/>
        <dbReference type="ChEBI" id="CHEBI:15379"/>
        <dbReference type="ChEBI" id="CHEBI:77016"/>
        <dbReference type="ChEBI" id="CHEBI:156131"/>
    </reaction>
    <physiologicalReaction direction="left-to-right" evidence="3">
        <dbReference type="Rhea" id="RHEA:64733"/>
    </physiologicalReaction>
</comment>
<comment type="catalytic activity">
    <reaction evidence="4">
        <text>N-(5Z,8Z,11Z,14Z)-eicosatetraenoyl-taurine + O2 = N-(12S)-hydroperoxy-(5Z,8Z,10E,14Z)-eicosatetraenoyl-taurine</text>
        <dbReference type="Rhea" id="RHEA:50160"/>
        <dbReference type="ChEBI" id="CHEBI:15379"/>
        <dbReference type="ChEBI" id="CHEBI:132060"/>
        <dbReference type="ChEBI" id="CHEBI:132061"/>
    </reaction>
    <physiologicalReaction direction="left-to-right" evidence="4">
        <dbReference type="Rhea" id="RHEA:50161"/>
    </physiologicalReaction>
</comment>
<comment type="catalytic activity">
    <reaction evidence="4">
        <text>N-(5Z,8Z,11Z,14Z)-eicosatetraenoyl-gamma-aminobutanoate + O2 = N-(12S)-hydroperoxy-(5Z,8Z,10E,14Z)-eicosatetraenoyl-gamma-aminobutanoate</text>
        <dbReference type="Rhea" id="RHEA:50176"/>
        <dbReference type="ChEBI" id="CHEBI:15379"/>
        <dbReference type="ChEBI" id="CHEBI:132072"/>
        <dbReference type="ChEBI" id="CHEBI:132075"/>
    </reaction>
    <physiologicalReaction direction="left-to-right" evidence="4">
        <dbReference type="Rhea" id="RHEA:50177"/>
    </physiologicalReaction>
</comment>
<comment type="catalytic activity">
    <reaction evidence="4">
        <text>N-(5Z,8Z,11Z,14Z)-eicosatetraenoyl-glycine + O2 = N-(12S)-hydroperoxy-(5Z,8Z,10E,14Z)-eicosatetraenoyl-glycine</text>
        <dbReference type="Rhea" id="RHEA:50168"/>
        <dbReference type="ChEBI" id="CHEBI:15379"/>
        <dbReference type="ChEBI" id="CHEBI:59002"/>
        <dbReference type="ChEBI" id="CHEBI:132073"/>
    </reaction>
    <physiologicalReaction direction="left-to-right" evidence="4">
        <dbReference type="Rhea" id="RHEA:50169"/>
    </physiologicalReaction>
</comment>
<comment type="catalytic activity">
    <reaction evidence="4">
        <text>N-(5Z,8Z,11Z,14Z)-eicosatetraenoyl-L-alanine + O2 = N-(12S)-hydroperoxy-(5Z,8Z,10E,14Z)-eicosatetraenoyl-alanine</text>
        <dbReference type="Rhea" id="RHEA:50172"/>
        <dbReference type="ChEBI" id="CHEBI:15379"/>
        <dbReference type="ChEBI" id="CHEBI:132071"/>
        <dbReference type="ChEBI" id="CHEBI:132074"/>
    </reaction>
    <physiologicalReaction direction="left-to-right" evidence="4">
        <dbReference type="Rhea" id="RHEA:50173"/>
    </physiologicalReaction>
</comment>
<comment type="catalytic activity">
    <reaction evidence="2">
        <text>N-(5Z,8Z,11Z,14Z)-eicosatetraenoyl-taurine + O2 = N-(15S)-hydroperoxy-(5Z,8Z,11Z,13E)-eicosatetraenoyl-taurine</text>
        <dbReference type="Rhea" id="RHEA:50156"/>
        <dbReference type="ChEBI" id="CHEBI:15379"/>
        <dbReference type="ChEBI" id="CHEBI:132060"/>
        <dbReference type="ChEBI" id="CHEBI:132062"/>
    </reaction>
    <physiologicalReaction direction="left-to-right" evidence="2">
        <dbReference type="Rhea" id="RHEA:50157"/>
    </physiologicalReaction>
</comment>
<comment type="catalytic activity">
    <reaction evidence="2">
        <text>N-(5Z,8Z,11Z,14Z)-eicosatetraenoyl-gamma-aminobutanoate + O2 = N-(15S)-hydroperoxy-(5Z,8Z,11Z,13E)-eicosatetraenoyl-gamma-aminobutanoate</text>
        <dbReference type="Rhea" id="RHEA:50180"/>
        <dbReference type="ChEBI" id="CHEBI:15379"/>
        <dbReference type="ChEBI" id="CHEBI:132072"/>
        <dbReference type="ChEBI" id="CHEBI:132078"/>
    </reaction>
    <physiologicalReaction direction="left-to-right" evidence="2">
        <dbReference type="Rhea" id="RHEA:50181"/>
    </physiologicalReaction>
</comment>
<comment type="catalytic activity">
    <reaction evidence="2">
        <text>N-(5Z,8Z,11Z,14Z)-eicosatetraenoyl-glycine + O2 = N-(15S)-hydroperoxy-(5Z,8Z,11Z,13E)-eicosatetraenoyl-glycine</text>
        <dbReference type="Rhea" id="RHEA:50188"/>
        <dbReference type="ChEBI" id="CHEBI:15379"/>
        <dbReference type="ChEBI" id="CHEBI:59002"/>
        <dbReference type="ChEBI" id="CHEBI:132076"/>
    </reaction>
    <physiologicalReaction direction="left-to-right" evidence="2">
        <dbReference type="Rhea" id="RHEA:50189"/>
    </physiologicalReaction>
</comment>
<comment type="catalytic activity">
    <reaction evidence="2">
        <text>N-(5Z,8Z,11Z,14Z)-eicosatetraenoyl-L-alanine + O2 = N-(15S)-hydroperoxy-(5Z,8Z,11Z,13E)-eicosatetraenoyl-alanine</text>
        <dbReference type="Rhea" id="RHEA:50184"/>
        <dbReference type="ChEBI" id="CHEBI:15379"/>
        <dbReference type="ChEBI" id="CHEBI:132071"/>
        <dbReference type="ChEBI" id="CHEBI:132077"/>
    </reaction>
    <physiologicalReaction direction="left-to-right" evidence="2">
        <dbReference type="Rhea" id="RHEA:50185"/>
    </physiologicalReaction>
</comment>
<comment type="cofactor">
    <cofactor evidence="4 8">
        <name>Fe cation</name>
        <dbReference type="ChEBI" id="CHEBI:24875"/>
    </cofactor>
    <text evidence="4 8">Binds 1 Fe cation per subunit.</text>
</comment>
<comment type="pathway">
    <text evidence="3">Lipid metabolism; hydroperoxy eicosatetraenoic acid biosynthesis.</text>
</comment>
<comment type="subunit">
    <text evidence="3">Interacts with PEBP1; in response to IL13/interleukin-13, prevents the interaction of PEBP1 with RAF1 to activate the ERK signaling cascade.</text>
</comment>
<comment type="subcellular location">
    <subcellularLocation>
        <location evidence="3">Cytoplasm</location>
        <location evidence="3">Cytosol</location>
    </subcellularLocation>
    <subcellularLocation>
        <location evidence="3">Cell membrane</location>
        <topology evidence="3">Peripheral membrane protein</topology>
    </subcellularLocation>
    <subcellularLocation>
        <location evidence="3">Lipid droplet</location>
    </subcellularLocation>
    <text evidence="5">Predominantly cytosolic; becomes enriched at membranes upon calcium binding. Translocates from the cytosol to the plasma membrane when stimulated by IL13/interleukin-13 and in macrophages binding apoptotic cells.</text>
</comment>
<comment type="domain">
    <text evidence="1">The PLAT domain can bind calcium ions; this promotes association with membranes.</text>
</comment>
<comment type="similarity">
    <text evidence="9">Belongs to the lipoxygenase family.</text>
</comment>
<keyword id="KW-0106">Calcium</keyword>
<keyword id="KW-1003">Cell membrane</keyword>
<keyword id="KW-0963">Cytoplasm</keyword>
<keyword id="KW-0223">Dioxygenase</keyword>
<keyword id="KW-0276">Fatty acid metabolism</keyword>
<keyword id="KW-0408">Iron</keyword>
<keyword id="KW-0551">Lipid droplet</keyword>
<keyword id="KW-0443">Lipid metabolism</keyword>
<keyword id="KW-0446">Lipid-binding</keyword>
<keyword id="KW-0472">Membrane</keyword>
<keyword id="KW-0479">Metal-binding</keyword>
<keyword id="KW-0560">Oxidoreductase</keyword>
<keyword id="KW-1185">Reference proteome</keyword>
<proteinExistence type="evidence at transcript level"/>
<accession>Q5RBE8</accession>
<sequence length="662" mass="74633">MGLYRIRVSTGASLYAGSNNQVQLWLVGQHGEAALGTRLWPARGKETELKVEVPEYLGPLLFVKLRKRHLLTDDAWFCNWISVQGPGAGDEVRFPCYRWVEGNGVLSLPEGTGRTVGDDPQGLFQKHREEELEERRKLYRWGNWKDGLILNVAGAKLCDLPVDERFLEDKRVDFEVSLAKGLADLAIKDSLNVLTCWKDLDDFNRIFWCGQSKLAERVRDSWKEDALFGYQFLNGANPVVLRRSVHLPARLVFPPGMEELQAQLEKELEGGTLFEADFSLLDGIKANVILCSQQHLAAPLVMLKLQPDGKLLPMVIQLQLPSTGSPPPPLFLPTDPPMAWLLAKCWVRSSDFQLHELQSHLLRGHLMAEVIVVATMRCLPSIHPIFKLIIPHLRYTLEINVRARTGLVSDMGIFDQIMSTGGGGHVQLLKQAGAFLTYSSFCPPDDLADRGLLGVKSSFYAQDALRLWEIIYRYVEGIVSLHYKTDVAVKDDPELQTWCREITEIGLQGAQDRGFPVSLQSRDQVCHFVTMCIFTCTGQHASVHLGQLDWYSWVPNAPCTMRLPPPTTKDATLETVMATLPNFHQASLQMSITWQLGRRQPVMVAVGQHEEEYFSGPEPKAVLKKFREELAALDKEIEIRNAKLDMPYEYLRPSIVENSVAI</sequence>
<gene>
    <name evidence="3" type="primary">ALOX15</name>
</gene>
<protein>
    <recommendedName>
        <fullName evidence="3">Polyunsaturated fatty acid lipoxygenase ALOX15</fullName>
    </recommendedName>
    <alternativeName>
        <fullName evidence="5">12/15-lipoxygenase</fullName>
    </alternativeName>
    <alternativeName>
        <fullName evidence="6">Arachidonate 12-lipoxygenase, leukocyte-type</fullName>
        <shortName>12-LOX</shortName>
        <shortName>L-12LO</shortName>
        <ecNumber evidence="3">1.13.11.31</ecNumber>
    </alternativeName>
    <alternativeName>
        <fullName>Arachidonate 15-lipoxygenase</fullName>
        <shortName>15-LOX</shortName>
        <ecNumber evidence="3">1.13.11.33</ecNumber>
    </alternativeName>
    <alternativeName>
        <fullName evidence="3">Arachidonate omega-6 lipoxygenase</fullName>
    </alternativeName>
    <alternativeName>
        <fullName evidence="6">Hepoxilin A3 synthase Alox15</fullName>
        <ecNumber evidence="6">1.13.11.-</ecNumber>
    </alternativeName>
    <alternativeName>
        <fullName evidence="3">Linoleate 13S-lipoxygenase</fullName>
        <ecNumber evidence="3">1.13.11.12</ecNumber>
    </alternativeName>
</protein>
<dbReference type="EC" id="1.13.11.31" evidence="3"/>
<dbReference type="EC" id="1.13.11.33" evidence="3"/>
<dbReference type="EC" id="1.13.11.-" evidence="6"/>
<dbReference type="EC" id="1.13.11.12" evidence="3"/>
<dbReference type="EMBL" id="CR858703">
    <property type="protein sequence ID" value="CAH90912.1"/>
    <property type="molecule type" value="mRNA"/>
</dbReference>
<dbReference type="RefSeq" id="NP_001127349.1">
    <property type="nucleotide sequence ID" value="NM_001133877.1"/>
</dbReference>
<dbReference type="SMR" id="Q5RBE8"/>
<dbReference type="FunCoup" id="Q5RBE8">
    <property type="interactions" value="210"/>
</dbReference>
<dbReference type="STRING" id="9601.ENSPPYP00000008824"/>
<dbReference type="Ensembl" id="ENSPPYT00000009186.3">
    <property type="protein sequence ID" value="ENSPPYP00000008824.2"/>
    <property type="gene ID" value="ENSPPYG00000007837.3"/>
</dbReference>
<dbReference type="GeneID" id="100174413"/>
<dbReference type="KEGG" id="pon:100174413"/>
<dbReference type="CTD" id="246"/>
<dbReference type="eggNOG" id="ENOG502QQSP">
    <property type="taxonomic scope" value="Eukaryota"/>
</dbReference>
<dbReference type="GeneTree" id="ENSGT00940000162807"/>
<dbReference type="HOGENOM" id="CLU_004282_3_3_1"/>
<dbReference type="InParanoid" id="Q5RBE8"/>
<dbReference type="OMA" id="SFCPPED"/>
<dbReference type="OrthoDB" id="407298at2759"/>
<dbReference type="TreeFam" id="TF105320"/>
<dbReference type="BRENDA" id="1.13.11.31">
    <property type="organism ID" value="9017"/>
</dbReference>
<dbReference type="BRENDA" id="1.13.11.33">
    <property type="organism ID" value="9017"/>
</dbReference>
<dbReference type="UniPathway" id="UPA00881"/>
<dbReference type="Proteomes" id="UP000001595">
    <property type="component" value="Chromosome 17"/>
</dbReference>
<dbReference type="GO" id="GO:0009898">
    <property type="term" value="C:cytoplasmic side of plasma membrane"/>
    <property type="evidence" value="ECO:0000250"/>
    <property type="project" value="UniProtKB"/>
</dbReference>
<dbReference type="GO" id="GO:0005829">
    <property type="term" value="C:cytosol"/>
    <property type="evidence" value="ECO:0000250"/>
    <property type="project" value="UniProtKB"/>
</dbReference>
<dbReference type="GO" id="GO:0005811">
    <property type="term" value="C:lipid droplet"/>
    <property type="evidence" value="ECO:0000250"/>
    <property type="project" value="UniProtKB"/>
</dbReference>
<dbReference type="GO" id="GO:0016020">
    <property type="term" value="C:membrane"/>
    <property type="evidence" value="ECO:0000250"/>
    <property type="project" value="UniProtKB"/>
</dbReference>
<dbReference type="GO" id="GO:0005886">
    <property type="term" value="C:plasma membrane"/>
    <property type="evidence" value="ECO:0000250"/>
    <property type="project" value="UniProtKB"/>
</dbReference>
<dbReference type="GO" id="GO:0004052">
    <property type="term" value="F:arachidonate 12(S)-lipoxygenase activity"/>
    <property type="evidence" value="ECO:0000250"/>
    <property type="project" value="UniProtKB"/>
</dbReference>
<dbReference type="GO" id="GO:0050473">
    <property type="term" value="F:arachidonate 15-lipoxygenase activity"/>
    <property type="evidence" value="ECO:0000250"/>
    <property type="project" value="UniProtKB"/>
</dbReference>
<dbReference type="GO" id="GO:0005506">
    <property type="term" value="F:iron ion binding"/>
    <property type="evidence" value="ECO:0000250"/>
    <property type="project" value="UniProtKB"/>
</dbReference>
<dbReference type="GO" id="GO:0016165">
    <property type="term" value="F:linoleate 13S-lipoxygenase activity"/>
    <property type="evidence" value="ECO:0000250"/>
    <property type="project" value="UniProtKB"/>
</dbReference>
<dbReference type="GO" id="GO:0005546">
    <property type="term" value="F:phosphatidylinositol-4,5-bisphosphate binding"/>
    <property type="evidence" value="ECO:0000250"/>
    <property type="project" value="UniProtKB"/>
</dbReference>
<dbReference type="GO" id="GO:0043277">
    <property type="term" value="P:apoptotic cell clearance"/>
    <property type="evidence" value="ECO:0000250"/>
    <property type="project" value="UniProtKB"/>
</dbReference>
<dbReference type="GO" id="GO:0019369">
    <property type="term" value="P:arachidonate metabolic process"/>
    <property type="evidence" value="ECO:0000250"/>
    <property type="project" value="UniProtKB"/>
</dbReference>
<dbReference type="GO" id="GO:0030282">
    <property type="term" value="P:bone mineralization"/>
    <property type="evidence" value="ECO:0000250"/>
    <property type="project" value="UniProtKB"/>
</dbReference>
<dbReference type="GO" id="GO:0071277">
    <property type="term" value="P:cellular response to calcium ion"/>
    <property type="evidence" value="ECO:0000250"/>
    <property type="project" value="UniProtKB"/>
</dbReference>
<dbReference type="GO" id="GO:0035963">
    <property type="term" value="P:cellular response to interleukin-13"/>
    <property type="evidence" value="ECO:0000250"/>
    <property type="project" value="UniProtKB"/>
</dbReference>
<dbReference type="GO" id="GO:0019395">
    <property type="term" value="P:fatty acid oxidation"/>
    <property type="evidence" value="ECO:0000250"/>
    <property type="project" value="UniProtKB"/>
</dbReference>
<dbReference type="GO" id="GO:0051122">
    <property type="term" value="P:hepoxilin biosynthetic process"/>
    <property type="evidence" value="ECO:0000250"/>
    <property type="project" value="UniProtKB"/>
</dbReference>
<dbReference type="GO" id="GO:0043651">
    <property type="term" value="P:linoleic acid metabolic process"/>
    <property type="evidence" value="ECO:0000250"/>
    <property type="project" value="UniProtKB"/>
</dbReference>
<dbReference type="GO" id="GO:0006629">
    <property type="term" value="P:lipid metabolic process"/>
    <property type="evidence" value="ECO:0000250"/>
    <property type="project" value="UniProtKB"/>
</dbReference>
<dbReference type="GO" id="GO:2001303">
    <property type="term" value="P:lipoxin A4 biosynthetic process"/>
    <property type="evidence" value="ECO:0000250"/>
    <property type="project" value="UniProtKB"/>
</dbReference>
<dbReference type="GO" id="GO:0019372">
    <property type="term" value="P:lipoxygenase pathway"/>
    <property type="evidence" value="ECO:0000250"/>
    <property type="project" value="UniProtKB"/>
</dbReference>
<dbReference type="GO" id="GO:0002820">
    <property type="term" value="P:negative regulation of adaptive immune response"/>
    <property type="evidence" value="ECO:0000250"/>
    <property type="project" value="UniProtKB"/>
</dbReference>
<dbReference type="GO" id="GO:0001503">
    <property type="term" value="P:ossification"/>
    <property type="evidence" value="ECO:0000250"/>
    <property type="project" value="UniProtKB"/>
</dbReference>
<dbReference type="GO" id="GO:0006646">
    <property type="term" value="P:phosphatidylethanolamine biosynthetic process"/>
    <property type="evidence" value="ECO:0000250"/>
    <property type="project" value="UniProtKB"/>
</dbReference>
<dbReference type="GO" id="GO:0030838">
    <property type="term" value="P:positive regulation of actin filament polymerization"/>
    <property type="evidence" value="ECO:0000250"/>
    <property type="project" value="UniProtKB"/>
</dbReference>
<dbReference type="GO" id="GO:0010811">
    <property type="term" value="P:positive regulation of cell-substrate adhesion"/>
    <property type="evidence" value="ECO:0000250"/>
    <property type="project" value="UniProtKB"/>
</dbReference>
<dbReference type="GO" id="GO:0070374">
    <property type="term" value="P:positive regulation of ERK1 and ERK2 cascade"/>
    <property type="evidence" value="ECO:0000250"/>
    <property type="project" value="UniProtKB"/>
</dbReference>
<dbReference type="GO" id="GO:1901074">
    <property type="term" value="P:regulation of engulfment of apoptotic cell"/>
    <property type="evidence" value="ECO:0000250"/>
    <property type="project" value="UniProtKB"/>
</dbReference>
<dbReference type="GO" id="GO:0050727">
    <property type="term" value="P:regulation of inflammatory response"/>
    <property type="evidence" value="ECO:0000250"/>
    <property type="project" value="UniProtKB"/>
</dbReference>
<dbReference type="GO" id="GO:0035358">
    <property type="term" value="P:regulation of peroxisome proliferator activated receptor signaling pathway"/>
    <property type="evidence" value="ECO:0000250"/>
    <property type="project" value="UniProtKB"/>
</dbReference>
<dbReference type="GO" id="GO:0034976">
    <property type="term" value="P:response to endoplasmic reticulum stress"/>
    <property type="evidence" value="ECO:0000250"/>
    <property type="project" value="UniProtKB"/>
</dbReference>
<dbReference type="GO" id="GO:0042060">
    <property type="term" value="P:wound healing"/>
    <property type="evidence" value="ECO:0000250"/>
    <property type="project" value="UniProtKB"/>
</dbReference>
<dbReference type="CDD" id="cd01753">
    <property type="entry name" value="PLAT_LOX"/>
    <property type="match status" value="1"/>
</dbReference>
<dbReference type="FunFam" id="3.10.450.60:FF:000004">
    <property type="entry name" value="Arachidonate 12-lipoxygenase, 12S-type"/>
    <property type="match status" value="1"/>
</dbReference>
<dbReference type="FunFam" id="1.20.245.10:FF:000001">
    <property type="entry name" value="Arachidonate 5-lipoxygenase a"/>
    <property type="match status" value="1"/>
</dbReference>
<dbReference type="FunFam" id="2.60.60.20:FF:000002">
    <property type="entry name" value="Arachidonate 5-lipoxygenase a"/>
    <property type="match status" value="1"/>
</dbReference>
<dbReference type="Gene3D" id="3.10.450.60">
    <property type="match status" value="1"/>
</dbReference>
<dbReference type="Gene3D" id="1.20.245.10">
    <property type="entry name" value="Lipoxygenase-1, Domain 5"/>
    <property type="match status" value="1"/>
</dbReference>
<dbReference type="Gene3D" id="2.60.60.20">
    <property type="entry name" value="PLAT/LH2 domain"/>
    <property type="match status" value="1"/>
</dbReference>
<dbReference type="InterPro" id="IPR000907">
    <property type="entry name" value="LipOase"/>
</dbReference>
<dbReference type="InterPro" id="IPR013819">
    <property type="entry name" value="LipOase_C"/>
</dbReference>
<dbReference type="InterPro" id="IPR036226">
    <property type="entry name" value="LipOase_C_sf"/>
</dbReference>
<dbReference type="InterPro" id="IPR020834">
    <property type="entry name" value="LipOase_CS"/>
</dbReference>
<dbReference type="InterPro" id="IPR020833">
    <property type="entry name" value="LipOase_Fe_BS"/>
</dbReference>
<dbReference type="InterPro" id="IPR001885">
    <property type="entry name" value="LipOase_mml"/>
</dbReference>
<dbReference type="InterPro" id="IPR001024">
    <property type="entry name" value="PLAT/LH2_dom"/>
</dbReference>
<dbReference type="InterPro" id="IPR036392">
    <property type="entry name" value="PLAT/LH2_dom_sf"/>
</dbReference>
<dbReference type="InterPro" id="IPR042062">
    <property type="entry name" value="PLAT_LOX_verte"/>
</dbReference>
<dbReference type="PANTHER" id="PTHR11771">
    <property type="entry name" value="LIPOXYGENASE"/>
    <property type="match status" value="1"/>
</dbReference>
<dbReference type="Pfam" id="PF00305">
    <property type="entry name" value="Lipoxygenase"/>
    <property type="match status" value="1"/>
</dbReference>
<dbReference type="Pfam" id="PF01477">
    <property type="entry name" value="PLAT"/>
    <property type="match status" value="1"/>
</dbReference>
<dbReference type="PRINTS" id="PR00087">
    <property type="entry name" value="LIPOXYGENASE"/>
</dbReference>
<dbReference type="PRINTS" id="PR00467">
    <property type="entry name" value="MAMLPOXGNASE"/>
</dbReference>
<dbReference type="SMART" id="SM00308">
    <property type="entry name" value="LH2"/>
    <property type="match status" value="1"/>
</dbReference>
<dbReference type="SUPFAM" id="SSF49723">
    <property type="entry name" value="Lipase/lipooxygenase domain (PLAT/LH2 domain)"/>
    <property type="match status" value="1"/>
</dbReference>
<dbReference type="SUPFAM" id="SSF48484">
    <property type="entry name" value="Lipoxigenase"/>
    <property type="match status" value="1"/>
</dbReference>
<dbReference type="PROSITE" id="PS00711">
    <property type="entry name" value="LIPOXYGENASE_1"/>
    <property type="match status" value="1"/>
</dbReference>
<dbReference type="PROSITE" id="PS00081">
    <property type="entry name" value="LIPOXYGENASE_2"/>
    <property type="match status" value="1"/>
</dbReference>
<dbReference type="PROSITE" id="PS51393">
    <property type="entry name" value="LIPOXYGENASE_3"/>
    <property type="match status" value="1"/>
</dbReference>
<dbReference type="PROSITE" id="PS50095">
    <property type="entry name" value="PLAT"/>
    <property type="match status" value="1"/>
</dbReference>
<evidence type="ECO:0000250" key="1"/>
<evidence type="ECO:0000250" key="2">
    <source>
        <dbReference type="UniProtKB" id="P12530"/>
    </source>
</evidence>
<evidence type="ECO:0000250" key="3">
    <source>
        <dbReference type="UniProtKB" id="P16050"/>
    </source>
</evidence>
<evidence type="ECO:0000250" key="4">
    <source>
        <dbReference type="UniProtKB" id="P16469"/>
    </source>
</evidence>
<evidence type="ECO:0000250" key="5">
    <source>
        <dbReference type="UniProtKB" id="P39654"/>
    </source>
</evidence>
<evidence type="ECO:0000250" key="6">
    <source>
        <dbReference type="UniProtKB" id="Q02759"/>
    </source>
</evidence>
<evidence type="ECO:0000255" key="7">
    <source>
        <dbReference type="PROSITE-ProRule" id="PRU00152"/>
    </source>
</evidence>
<evidence type="ECO:0000255" key="8">
    <source>
        <dbReference type="PROSITE-ProRule" id="PRU00726"/>
    </source>
</evidence>
<evidence type="ECO:0000305" key="9"/>